<sequence length="100" mass="10799">MSTIPVTIDFSGGAEFLVKAKAQKVQIPADSTLRDVLKFVRDNLVTDVHRINMLLNDDASEVAHGVITLINDTDTGLLLEYDTVIEAGDTITFVSTLHGG</sequence>
<dbReference type="EMBL" id="AM933233">
    <property type="protein sequence ID" value="CAP69839.1"/>
    <property type="molecule type" value="mRNA"/>
</dbReference>
<dbReference type="EMBL" id="Z35640">
    <property type="protein sequence ID" value="CAX51654.1"/>
    <property type="molecule type" value="Genomic_DNA"/>
</dbReference>
<dbReference type="RefSeq" id="NP_001255080.1">
    <property type="nucleotide sequence ID" value="NM_001268151.3"/>
</dbReference>
<dbReference type="SMR" id="B3CKG1"/>
<dbReference type="BioGRID" id="2549937">
    <property type="interactions" value="7"/>
</dbReference>
<dbReference type="FunCoup" id="B3CKG1">
    <property type="interactions" value="2392"/>
</dbReference>
<dbReference type="STRING" id="6239.F43D9.6.1"/>
<dbReference type="PaxDb" id="6239-F43D9.6"/>
<dbReference type="PeptideAtlas" id="B3CKG1"/>
<dbReference type="EnsemblMetazoa" id="F43D9.6.1">
    <property type="protein sequence ID" value="F43D9.6.1"/>
    <property type="gene ID" value="WBGene00185048"/>
</dbReference>
<dbReference type="GeneID" id="13191153"/>
<dbReference type="KEGG" id="cel:CELE_F43D9.6"/>
<dbReference type="AGR" id="WB:WBGene00185048"/>
<dbReference type="CTD" id="13191153"/>
<dbReference type="WormBase" id="F43D9.6">
    <property type="protein sequence ID" value="CE43538"/>
    <property type="gene ID" value="WBGene00185048"/>
    <property type="gene designation" value="urm-1"/>
</dbReference>
<dbReference type="eggNOG" id="KOG4146">
    <property type="taxonomic scope" value="Eukaryota"/>
</dbReference>
<dbReference type="GeneTree" id="ENSGT00390000005101"/>
<dbReference type="HOGENOM" id="CLU_148208_0_0_1"/>
<dbReference type="InParanoid" id="B3CKG1"/>
<dbReference type="OMA" id="DVHRINM"/>
<dbReference type="OrthoDB" id="10248987at2759"/>
<dbReference type="PhylomeDB" id="B3CKG1"/>
<dbReference type="UniPathway" id="UPA00988"/>
<dbReference type="PRO" id="PR:B3CKG1"/>
<dbReference type="Proteomes" id="UP000001940">
    <property type="component" value="Chromosome III"/>
</dbReference>
<dbReference type="Bgee" id="WBGene00185048">
    <property type="expression patterns" value="Expressed in embryo and 3 other cell types or tissues"/>
</dbReference>
<dbReference type="GO" id="GO:0005829">
    <property type="term" value="C:cytosol"/>
    <property type="evidence" value="ECO:0007669"/>
    <property type="project" value="UniProtKB-UniRule"/>
</dbReference>
<dbReference type="GO" id="GO:0005634">
    <property type="term" value="C:nucleus"/>
    <property type="evidence" value="ECO:0000318"/>
    <property type="project" value="GO_Central"/>
</dbReference>
<dbReference type="GO" id="GO:0031386">
    <property type="term" value="F:protein tag activity"/>
    <property type="evidence" value="ECO:0000318"/>
    <property type="project" value="GO_Central"/>
</dbReference>
<dbReference type="GO" id="GO:0032447">
    <property type="term" value="P:protein urmylation"/>
    <property type="evidence" value="ECO:0000318"/>
    <property type="project" value="GO_Central"/>
</dbReference>
<dbReference type="GO" id="GO:0034227">
    <property type="term" value="P:tRNA thio-modification"/>
    <property type="evidence" value="ECO:0007669"/>
    <property type="project" value="UniProtKB-UniRule"/>
</dbReference>
<dbReference type="GO" id="GO:0002098">
    <property type="term" value="P:tRNA wobble uridine modification"/>
    <property type="evidence" value="ECO:0007669"/>
    <property type="project" value="UniProtKB-UniRule"/>
</dbReference>
<dbReference type="CDD" id="cd01764">
    <property type="entry name" value="Ubl_Urm1"/>
    <property type="match status" value="1"/>
</dbReference>
<dbReference type="Gene3D" id="3.10.20.30">
    <property type="match status" value="1"/>
</dbReference>
<dbReference type="HAMAP" id="MF_03048">
    <property type="entry name" value="Urm1"/>
    <property type="match status" value="1"/>
</dbReference>
<dbReference type="InterPro" id="IPR012675">
    <property type="entry name" value="Beta-grasp_dom_sf"/>
</dbReference>
<dbReference type="InterPro" id="IPR016155">
    <property type="entry name" value="Mopterin_synth/thiamin_S_b"/>
</dbReference>
<dbReference type="InterPro" id="IPR015221">
    <property type="entry name" value="Urm1"/>
</dbReference>
<dbReference type="PANTHER" id="PTHR14986">
    <property type="entry name" value="RURM1 PROTEIN"/>
    <property type="match status" value="1"/>
</dbReference>
<dbReference type="Pfam" id="PF09138">
    <property type="entry name" value="Urm1"/>
    <property type="match status" value="1"/>
</dbReference>
<dbReference type="SUPFAM" id="SSF54285">
    <property type="entry name" value="MoaD/ThiS"/>
    <property type="match status" value="1"/>
</dbReference>
<name>URM1_CAEEL</name>
<feature type="chain" id="PRO_0000367850" description="Ubiquitin-related modifier 1 homolog">
    <location>
        <begin position="1"/>
        <end position="100"/>
    </location>
</feature>
<feature type="modified residue" description="1-thioglycine" evidence="1">
    <location>
        <position position="100"/>
    </location>
</feature>
<feature type="cross-link" description="Glycyl lysine isopeptide (Gly-Lys) (interchain with K-? in acceptor proteins)" evidence="1">
    <location>
        <position position="100"/>
    </location>
</feature>
<accession>B3CKG1</accession>
<accession>C0P277</accession>
<comment type="function">
    <text evidence="1">Acts as a sulfur carrier required for 2-thiolation of mcm(5)S(2)U at tRNA wobble positions of cytosolic tRNA(Lys), tRNA(Glu) and tRNA(Gln). Serves as sulfur donor in tRNA 2-thiolation reaction by being thiocarboxylated (-COSH) at its C-terminus by MOCS3. The sulfur is then transferred to tRNA to form 2-thiolation of mcm(5)S(2)U. Also acts as a ubiquitin-like protein (UBL) that is covalently conjugated via an isopeptide bond to lysine residues of target proteins. The thiocarboxylated form serves as substrate for conjugation and oxidative stress specifically induces the formation of UBL-protein conjugates.</text>
</comment>
<comment type="pathway">
    <text evidence="1">tRNA modification; 5-methoxycarbonylmethyl-2-thiouridine-tRNA biosynthesis.</text>
</comment>
<comment type="subcellular location">
    <subcellularLocation>
        <location evidence="1">Cytoplasm</location>
    </subcellularLocation>
</comment>
<comment type="PTM">
    <text evidence="1">C-terminal thiocarboxylation occurs in 2 steps, it is first acyl-adenylated (-COAMP) via the hesA/moeB/thiF part of the MOCS3 homolog, then thiocarboxylated (-COSH) via the rhodanese domain of the MOCS3 homolog.</text>
</comment>
<comment type="similarity">
    <text evidence="1">Belongs to the URM1 family.</text>
</comment>
<gene>
    <name evidence="1" type="primary">urm-1</name>
    <name type="ORF">F43D9.6</name>
</gene>
<reference key="1">
    <citation type="submission" date="2008-06" db="EMBL/GenBank/DDBJ databases">
        <title>The ubiquitin-related modifier Urm1p functions as a sulfur-carrier in thiolation of eukaryotic tRNA.</title>
        <authorList>
            <person name="Leidel S."/>
        </authorList>
    </citation>
    <scope>NUCLEOTIDE SEQUENCE [GENOMIC DNA]</scope>
</reference>
<reference key="2">
    <citation type="journal article" date="1998" name="Science">
        <title>Genome sequence of the nematode C. elegans: a platform for investigating biology.</title>
        <authorList>
            <consortium name="The C. elegans sequencing consortium"/>
        </authorList>
    </citation>
    <scope>NUCLEOTIDE SEQUENCE [LARGE SCALE GENOMIC DNA]</scope>
    <source>
        <strain>Bristol N2</strain>
    </source>
</reference>
<keyword id="KW-0963">Cytoplasm</keyword>
<keyword id="KW-1017">Isopeptide bond</keyword>
<keyword id="KW-1185">Reference proteome</keyword>
<keyword id="KW-0819">tRNA processing</keyword>
<keyword id="KW-0833">Ubl conjugation pathway</keyword>
<protein>
    <recommendedName>
        <fullName evidence="1">Ubiquitin-related modifier 1 homolog</fullName>
    </recommendedName>
</protein>
<organism>
    <name type="scientific">Caenorhabditis elegans</name>
    <dbReference type="NCBI Taxonomy" id="6239"/>
    <lineage>
        <taxon>Eukaryota</taxon>
        <taxon>Metazoa</taxon>
        <taxon>Ecdysozoa</taxon>
        <taxon>Nematoda</taxon>
        <taxon>Chromadorea</taxon>
        <taxon>Rhabditida</taxon>
        <taxon>Rhabditina</taxon>
        <taxon>Rhabditomorpha</taxon>
        <taxon>Rhabditoidea</taxon>
        <taxon>Rhabditidae</taxon>
        <taxon>Peloderinae</taxon>
        <taxon>Caenorhabditis</taxon>
    </lineage>
</organism>
<proteinExistence type="inferred from homology"/>
<evidence type="ECO:0000255" key="1">
    <source>
        <dbReference type="HAMAP-Rule" id="MF_03048"/>
    </source>
</evidence>